<reference key="1">
    <citation type="journal article" date="2010" name="PLoS ONE">
        <title>The complete genome sequence of Cupriavidus metallidurans strain CH34, a master survivalist in harsh and anthropogenic environments.</title>
        <authorList>
            <person name="Janssen P.J."/>
            <person name="Van Houdt R."/>
            <person name="Moors H."/>
            <person name="Monsieurs P."/>
            <person name="Morin N."/>
            <person name="Michaux A."/>
            <person name="Benotmane M.A."/>
            <person name="Leys N."/>
            <person name="Vallaeys T."/>
            <person name="Lapidus A."/>
            <person name="Monchy S."/>
            <person name="Medigue C."/>
            <person name="Taghavi S."/>
            <person name="McCorkle S."/>
            <person name="Dunn J."/>
            <person name="van der Lelie D."/>
            <person name="Mergeay M."/>
        </authorList>
    </citation>
    <scope>NUCLEOTIDE SEQUENCE [LARGE SCALE GENOMIC DNA]</scope>
    <source>
        <strain>ATCC 43123 / DSM 2839 / NBRC 102507 / CH34</strain>
    </source>
</reference>
<dbReference type="EC" id="2.5.1.141" evidence="1"/>
<dbReference type="EMBL" id="CP000352">
    <property type="protein sequence ID" value="ABF07156.1"/>
    <property type="status" value="ALT_INIT"/>
    <property type="molecule type" value="Genomic_DNA"/>
</dbReference>
<dbReference type="SMR" id="Q1LRS0"/>
<dbReference type="STRING" id="266264.Rmet_0270"/>
<dbReference type="KEGG" id="rme:Rmet_0270"/>
<dbReference type="eggNOG" id="COG0109">
    <property type="taxonomic scope" value="Bacteria"/>
</dbReference>
<dbReference type="HOGENOM" id="CLU_029631_0_2_4"/>
<dbReference type="UniPathway" id="UPA00834">
    <property type="reaction ID" value="UER00712"/>
</dbReference>
<dbReference type="Proteomes" id="UP000002429">
    <property type="component" value="Chromosome"/>
</dbReference>
<dbReference type="GO" id="GO:0005886">
    <property type="term" value="C:plasma membrane"/>
    <property type="evidence" value="ECO:0007669"/>
    <property type="project" value="UniProtKB-SubCell"/>
</dbReference>
<dbReference type="GO" id="GO:0008495">
    <property type="term" value="F:protoheme IX farnesyltransferase activity"/>
    <property type="evidence" value="ECO:0007669"/>
    <property type="project" value="UniProtKB-UniRule"/>
</dbReference>
<dbReference type="GO" id="GO:0048034">
    <property type="term" value="P:heme O biosynthetic process"/>
    <property type="evidence" value="ECO:0007669"/>
    <property type="project" value="UniProtKB-UniRule"/>
</dbReference>
<dbReference type="CDD" id="cd13957">
    <property type="entry name" value="PT_UbiA_Cox10"/>
    <property type="match status" value="1"/>
</dbReference>
<dbReference type="Gene3D" id="1.10.357.140">
    <property type="entry name" value="UbiA prenyltransferase"/>
    <property type="match status" value="1"/>
</dbReference>
<dbReference type="HAMAP" id="MF_00154">
    <property type="entry name" value="CyoE_CtaB"/>
    <property type="match status" value="1"/>
</dbReference>
<dbReference type="InterPro" id="IPR006369">
    <property type="entry name" value="Protohaem_IX_farnesylTrfase"/>
</dbReference>
<dbReference type="InterPro" id="IPR000537">
    <property type="entry name" value="UbiA_prenyltransferase"/>
</dbReference>
<dbReference type="InterPro" id="IPR030470">
    <property type="entry name" value="UbiA_prenylTrfase_CS"/>
</dbReference>
<dbReference type="InterPro" id="IPR044878">
    <property type="entry name" value="UbiA_sf"/>
</dbReference>
<dbReference type="NCBIfam" id="TIGR01473">
    <property type="entry name" value="cyoE_ctaB"/>
    <property type="match status" value="1"/>
</dbReference>
<dbReference type="NCBIfam" id="NF003349">
    <property type="entry name" value="PRK04375.1-2"/>
    <property type="match status" value="1"/>
</dbReference>
<dbReference type="PANTHER" id="PTHR43448:SF7">
    <property type="entry name" value="4-HYDROXYBENZOATE SOLANESYLTRANSFERASE"/>
    <property type="match status" value="1"/>
</dbReference>
<dbReference type="PANTHER" id="PTHR43448">
    <property type="entry name" value="PROTOHEME IX FARNESYLTRANSFERASE, MITOCHONDRIAL"/>
    <property type="match status" value="1"/>
</dbReference>
<dbReference type="Pfam" id="PF01040">
    <property type="entry name" value="UbiA"/>
    <property type="match status" value="1"/>
</dbReference>
<dbReference type="PROSITE" id="PS00943">
    <property type="entry name" value="UBIA"/>
    <property type="match status" value="1"/>
</dbReference>
<comment type="function">
    <text evidence="1">Converts heme B (protoheme IX) to heme O by substitution of the vinyl group on carbon 2 of heme B porphyrin ring with a hydroxyethyl farnesyl side group.</text>
</comment>
<comment type="catalytic activity">
    <reaction evidence="1">
        <text>heme b + (2E,6E)-farnesyl diphosphate + H2O = Fe(II)-heme o + diphosphate</text>
        <dbReference type="Rhea" id="RHEA:28070"/>
        <dbReference type="ChEBI" id="CHEBI:15377"/>
        <dbReference type="ChEBI" id="CHEBI:33019"/>
        <dbReference type="ChEBI" id="CHEBI:60344"/>
        <dbReference type="ChEBI" id="CHEBI:60530"/>
        <dbReference type="ChEBI" id="CHEBI:175763"/>
        <dbReference type="EC" id="2.5.1.141"/>
    </reaction>
</comment>
<comment type="pathway">
    <text evidence="1">Porphyrin-containing compound metabolism; heme O biosynthesis; heme O from protoheme: step 1/1.</text>
</comment>
<comment type="subcellular location">
    <subcellularLocation>
        <location evidence="1">Cell inner membrane</location>
        <topology evidence="1">Multi-pass membrane protein</topology>
    </subcellularLocation>
</comment>
<comment type="miscellaneous">
    <text evidence="1">Carbon 2 of the heme B porphyrin ring is defined according to the Fischer nomenclature.</text>
</comment>
<comment type="similarity">
    <text evidence="1">Belongs to the UbiA prenyltransferase family. Protoheme IX farnesyltransferase subfamily.</text>
</comment>
<comment type="sequence caution" evidence="2">
    <conflict type="erroneous initiation">
        <sequence resource="EMBL-CDS" id="ABF07156"/>
    </conflict>
</comment>
<sequence length="305" mass="33576">MVTATHSQSSVGRLRHLARQYAALTKPRVTQLAVFCAIIGMFLATPGMVPWSVLIGGAAGIWLLAGAAFAINCLVEQKIDALMRRTAWRPSATGEITTTQTLIFSAVLGGAGMWLLHVFANDLTMWLTFATFLGYAVVYTILLKPATPQNIVIGGLSGAMPPALGWSAVSGTVPAEAWFLVLIIFTWTPPHFWALALYRRADYAKSGLPMLPITHGERYTLLHILLYTLIMIAATLLPFVYGMSGYIYLVAALGLGLVFLGYAWKLYRNYSDGLAQRTFRYSILYLSLLFAVLLVDHYFKFVPQV</sequence>
<evidence type="ECO:0000255" key="1">
    <source>
        <dbReference type="HAMAP-Rule" id="MF_00154"/>
    </source>
</evidence>
<evidence type="ECO:0000305" key="2"/>
<feature type="chain" id="PRO_0000327127" description="Protoheme IX farnesyltransferase">
    <location>
        <begin position="1"/>
        <end position="305"/>
    </location>
</feature>
<feature type="transmembrane region" description="Helical" evidence="1">
    <location>
        <begin position="29"/>
        <end position="49"/>
    </location>
</feature>
<feature type="transmembrane region" description="Helical" evidence="1">
    <location>
        <begin position="51"/>
        <end position="71"/>
    </location>
</feature>
<feature type="transmembrane region" description="Helical" evidence="1">
    <location>
        <begin position="101"/>
        <end position="121"/>
    </location>
</feature>
<feature type="transmembrane region" description="Helical" evidence="1">
    <location>
        <begin position="123"/>
        <end position="143"/>
    </location>
</feature>
<feature type="transmembrane region" description="Helical" evidence="1">
    <location>
        <begin position="151"/>
        <end position="171"/>
    </location>
</feature>
<feature type="transmembrane region" description="Helical" evidence="1">
    <location>
        <begin position="177"/>
        <end position="197"/>
    </location>
</feature>
<feature type="transmembrane region" description="Helical" evidence="1">
    <location>
        <begin position="221"/>
        <end position="241"/>
    </location>
</feature>
<feature type="transmembrane region" description="Helical" evidence="1">
    <location>
        <begin position="244"/>
        <end position="264"/>
    </location>
</feature>
<feature type="transmembrane region" description="Helical" evidence="1">
    <location>
        <begin position="283"/>
        <end position="303"/>
    </location>
</feature>
<accession>Q1LRS0</accession>
<proteinExistence type="inferred from homology"/>
<name>COXX_CUPMC</name>
<keyword id="KW-0997">Cell inner membrane</keyword>
<keyword id="KW-1003">Cell membrane</keyword>
<keyword id="KW-0350">Heme biosynthesis</keyword>
<keyword id="KW-0472">Membrane</keyword>
<keyword id="KW-1185">Reference proteome</keyword>
<keyword id="KW-0808">Transferase</keyword>
<keyword id="KW-0812">Transmembrane</keyword>
<keyword id="KW-1133">Transmembrane helix</keyword>
<protein>
    <recommendedName>
        <fullName evidence="1">Protoheme IX farnesyltransferase</fullName>
        <ecNumber evidence="1">2.5.1.141</ecNumber>
    </recommendedName>
    <alternativeName>
        <fullName evidence="1">Heme B farnesyltransferase</fullName>
    </alternativeName>
    <alternativeName>
        <fullName evidence="1">Heme O synthase</fullName>
    </alternativeName>
</protein>
<organism>
    <name type="scientific">Cupriavidus metallidurans (strain ATCC 43123 / DSM 2839 / NBRC 102507 / CH34)</name>
    <name type="common">Ralstonia metallidurans</name>
    <dbReference type="NCBI Taxonomy" id="266264"/>
    <lineage>
        <taxon>Bacteria</taxon>
        <taxon>Pseudomonadati</taxon>
        <taxon>Pseudomonadota</taxon>
        <taxon>Betaproteobacteria</taxon>
        <taxon>Burkholderiales</taxon>
        <taxon>Burkholderiaceae</taxon>
        <taxon>Cupriavidus</taxon>
    </lineage>
</organism>
<gene>
    <name evidence="1" type="primary">ctaB</name>
    <name type="ordered locus">Rmet_0270</name>
</gene>